<dbReference type="EC" id="3.5.1.18" evidence="1"/>
<dbReference type="EMBL" id="AL591688">
    <property type="protein sequence ID" value="CAC41862.1"/>
    <property type="molecule type" value="Genomic_DNA"/>
</dbReference>
<dbReference type="RefSeq" id="NP_384531.1">
    <property type="nucleotide sequence ID" value="NC_003047.1"/>
</dbReference>
<dbReference type="RefSeq" id="WP_010968566.1">
    <property type="nucleotide sequence ID" value="NC_003047.1"/>
</dbReference>
<dbReference type="SMR" id="Q92SH1"/>
<dbReference type="EnsemblBacteria" id="CAC41862">
    <property type="protein sequence ID" value="CAC41862"/>
    <property type="gene ID" value="SMc01096"/>
</dbReference>
<dbReference type="KEGG" id="sme:SMc01096"/>
<dbReference type="PATRIC" id="fig|266834.11.peg.1798"/>
<dbReference type="eggNOG" id="COG0624">
    <property type="taxonomic scope" value="Bacteria"/>
</dbReference>
<dbReference type="HOGENOM" id="CLU_021802_4_0_5"/>
<dbReference type="OrthoDB" id="9809784at2"/>
<dbReference type="UniPathway" id="UPA00034">
    <property type="reaction ID" value="UER00021"/>
</dbReference>
<dbReference type="Proteomes" id="UP000001976">
    <property type="component" value="Chromosome"/>
</dbReference>
<dbReference type="GO" id="GO:0008777">
    <property type="term" value="F:acetylornithine deacetylase activity"/>
    <property type="evidence" value="ECO:0007669"/>
    <property type="project" value="TreeGrafter"/>
</dbReference>
<dbReference type="GO" id="GO:0050897">
    <property type="term" value="F:cobalt ion binding"/>
    <property type="evidence" value="ECO:0007669"/>
    <property type="project" value="UniProtKB-UniRule"/>
</dbReference>
<dbReference type="GO" id="GO:0009014">
    <property type="term" value="F:succinyl-diaminopimelate desuccinylase activity"/>
    <property type="evidence" value="ECO:0007669"/>
    <property type="project" value="UniProtKB-UniRule"/>
</dbReference>
<dbReference type="GO" id="GO:0008270">
    <property type="term" value="F:zinc ion binding"/>
    <property type="evidence" value="ECO:0007669"/>
    <property type="project" value="UniProtKB-UniRule"/>
</dbReference>
<dbReference type="GO" id="GO:0019877">
    <property type="term" value="P:diaminopimelate biosynthetic process"/>
    <property type="evidence" value="ECO:0007669"/>
    <property type="project" value="UniProtKB-UniRule"/>
</dbReference>
<dbReference type="GO" id="GO:0006526">
    <property type="term" value="P:L-arginine biosynthetic process"/>
    <property type="evidence" value="ECO:0007669"/>
    <property type="project" value="TreeGrafter"/>
</dbReference>
<dbReference type="GO" id="GO:0009089">
    <property type="term" value="P:lysine biosynthetic process via diaminopimelate"/>
    <property type="evidence" value="ECO:0007669"/>
    <property type="project" value="UniProtKB-UniRule"/>
</dbReference>
<dbReference type="CDD" id="cd03891">
    <property type="entry name" value="M20_DapE_proteobac"/>
    <property type="match status" value="1"/>
</dbReference>
<dbReference type="Gene3D" id="3.40.630.10">
    <property type="entry name" value="Zn peptidases"/>
    <property type="match status" value="2"/>
</dbReference>
<dbReference type="HAMAP" id="MF_01690">
    <property type="entry name" value="DapE"/>
    <property type="match status" value="1"/>
</dbReference>
<dbReference type="InterPro" id="IPR001261">
    <property type="entry name" value="ArgE/DapE_CS"/>
</dbReference>
<dbReference type="InterPro" id="IPR036264">
    <property type="entry name" value="Bact_exopeptidase_dim_dom"/>
</dbReference>
<dbReference type="InterPro" id="IPR005941">
    <property type="entry name" value="DapE_proteobac"/>
</dbReference>
<dbReference type="InterPro" id="IPR002933">
    <property type="entry name" value="Peptidase_M20"/>
</dbReference>
<dbReference type="InterPro" id="IPR011650">
    <property type="entry name" value="Peptidase_M20_dimer"/>
</dbReference>
<dbReference type="InterPro" id="IPR050072">
    <property type="entry name" value="Peptidase_M20A"/>
</dbReference>
<dbReference type="NCBIfam" id="TIGR01246">
    <property type="entry name" value="dapE_proteo"/>
    <property type="match status" value="1"/>
</dbReference>
<dbReference type="NCBIfam" id="NF009557">
    <property type="entry name" value="PRK13009.1"/>
    <property type="match status" value="1"/>
</dbReference>
<dbReference type="PANTHER" id="PTHR43808">
    <property type="entry name" value="ACETYLORNITHINE DEACETYLASE"/>
    <property type="match status" value="1"/>
</dbReference>
<dbReference type="PANTHER" id="PTHR43808:SF31">
    <property type="entry name" value="N-ACETYL-L-CITRULLINE DEACETYLASE"/>
    <property type="match status" value="1"/>
</dbReference>
<dbReference type="Pfam" id="PF07687">
    <property type="entry name" value="M20_dimer"/>
    <property type="match status" value="1"/>
</dbReference>
<dbReference type="Pfam" id="PF01546">
    <property type="entry name" value="Peptidase_M20"/>
    <property type="match status" value="1"/>
</dbReference>
<dbReference type="SUPFAM" id="SSF55031">
    <property type="entry name" value="Bacterial exopeptidase dimerisation domain"/>
    <property type="match status" value="1"/>
</dbReference>
<dbReference type="SUPFAM" id="SSF53187">
    <property type="entry name" value="Zn-dependent exopeptidases"/>
    <property type="match status" value="1"/>
</dbReference>
<dbReference type="PROSITE" id="PS00758">
    <property type="entry name" value="ARGE_DAPE_CPG2_1"/>
    <property type="match status" value="1"/>
</dbReference>
<dbReference type="PROSITE" id="PS00759">
    <property type="entry name" value="ARGE_DAPE_CPG2_2"/>
    <property type="match status" value="1"/>
</dbReference>
<reference key="1">
    <citation type="journal article" date="2001" name="Proc. Natl. Acad. Sci. U.S.A.">
        <title>Analysis of the chromosome sequence of the legume symbiont Sinorhizobium meliloti strain 1021.</title>
        <authorList>
            <person name="Capela D."/>
            <person name="Barloy-Hubler F."/>
            <person name="Gouzy J."/>
            <person name="Bothe G."/>
            <person name="Ampe F."/>
            <person name="Batut J."/>
            <person name="Boistard P."/>
            <person name="Becker A."/>
            <person name="Boutry M."/>
            <person name="Cadieu E."/>
            <person name="Dreano S."/>
            <person name="Gloux S."/>
            <person name="Godrie T."/>
            <person name="Goffeau A."/>
            <person name="Kahn D."/>
            <person name="Kiss E."/>
            <person name="Lelaure V."/>
            <person name="Masuy D."/>
            <person name="Pohl T."/>
            <person name="Portetelle D."/>
            <person name="Puehler A."/>
            <person name="Purnelle B."/>
            <person name="Ramsperger U."/>
            <person name="Renard C."/>
            <person name="Thebault P."/>
            <person name="Vandenbol M."/>
            <person name="Weidner S."/>
            <person name="Galibert F."/>
        </authorList>
    </citation>
    <scope>NUCLEOTIDE SEQUENCE [LARGE SCALE GENOMIC DNA]</scope>
    <source>
        <strain>1021</strain>
    </source>
</reference>
<reference key="2">
    <citation type="journal article" date="2001" name="Science">
        <title>The composite genome of the legume symbiont Sinorhizobium meliloti.</title>
        <authorList>
            <person name="Galibert F."/>
            <person name="Finan T.M."/>
            <person name="Long S.R."/>
            <person name="Puehler A."/>
            <person name="Abola P."/>
            <person name="Ampe F."/>
            <person name="Barloy-Hubler F."/>
            <person name="Barnett M.J."/>
            <person name="Becker A."/>
            <person name="Boistard P."/>
            <person name="Bothe G."/>
            <person name="Boutry M."/>
            <person name="Bowser L."/>
            <person name="Buhrmester J."/>
            <person name="Cadieu E."/>
            <person name="Capela D."/>
            <person name="Chain P."/>
            <person name="Cowie A."/>
            <person name="Davis R.W."/>
            <person name="Dreano S."/>
            <person name="Federspiel N.A."/>
            <person name="Fisher R.F."/>
            <person name="Gloux S."/>
            <person name="Godrie T."/>
            <person name="Goffeau A."/>
            <person name="Golding B."/>
            <person name="Gouzy J."/>
            <person name="Gurjal M."/>
            <person name="Hernandez-Lucas I."/>
            <person name="Hong A."/>
            <person name="Huizar L."/>
            <person name="Hyman R.W."/>
            <person name="Jones T."/>
            <person name="Kahn D."/>
            <person name="Kahn M.L."/>
            <person name="Kalman S."/>
            <person name="Keating D.H."/>
            <person name="Kiss E."/>
            <person name="Komp C."/>
            <person name="Lelaure V."/>
            <person name="Masuy D."/>
            <person name="Palm C."/>
            <person name="Peck M.C."/>
            <person name="Pohl T.M."/>
            <person name="Portetelle D."/>
            <person name="Purnelle B."/>
            <person name="Ramsperger U."/>
            <person name="Surzycki R."/>
            <person name="Thebault P."/>
            <person name="Vandenbol M."/>
            <person name="Vorhoelter F.J."/>
            <person name="Weidner S."/>
            <person name="Wells D.H."/>
            <person name="Wong K."/>
            <person name="Yeh K.-C."/>
            <person name="Batut J."/>
        </authorList>
    </citation>
    <scope>NUCLEOTIDE SEQUENCE [LARGE SCALE GENOMIC DNA]</scope>
    <source>
        <strain>1021</strain>
    </source>
</reference>
<organism>
    <name type="scientific">Rhizobium meliloti (strain 1021)</name>
    <name type="common">Ensifer meliloti</name>
    <name type="synonym">Sinorhizobium meliloti</name>
    <dbReference type="NCBI Taxonomy" id="266834"/>
    <lineage>
        <taxon>Bacteria</taxon>
        <taxon>Pseudomonadati</taxon>
        <taxon>Pseudomonadota</taxon>
        <taxon>Alphaproteobacteria</taxon>
        <taxon>Hyphomicrobiales</taxon>
        <taxon>Rhizobiaceae</taxon>
        <taxon>Sinorhizobium/Ensifer group</taxon>
        <taxon>Sinorhizobium</taxon>
    </lineage>
</organism>
<keyword id="KW-0028">Amino-acid biosynthesis</keyword>
<keyword id="KW-0170">Cobalt</keyword>
<keyword id="KW-0220">Diaminopimelate biosynthesis</keyword>
<keyword id="KW-0378">Hydrolase</keyword>
<keyword id="KW-0457">Lysine biosynthesis</keyword>
<keyword id="KW-0479">Metal-binding</keyword>
<keyword id="KW-1185">Reference proteome</keyword>
<keyword id="KW-0862">Zinc</keyword>
<evidence type="ECO:0000255" key="1">
    <source>
        <dbReference type="HAMAP-Rule" id="MF_01690"/>
    </source>
</evidence>
<gene>
    <name evidence="1" type="primary">dapE</name>
    <name type="ordered locus">R00425</name>
    <name type="ORF">SMc01096</name>
</gene>
<name>DAPE_RHIME</name>
<comment type="function">
    <text evidence="1">Catalyzes the hydrolysis of N-succinyl-L,L-diaminopimelic acid (SDAP), forming succinate and LL-2,6-diaminopimelate (DAP), an intermediate involved in the bacterial biosynthesis of lysine and meso-diaminopimelic acid, an essential component of bacterial cell walls.</text>
</comment>
<comment type="catalytic activity">
    <reaction evidence="1">
        <text>N-succinyl-(2S,6S)-2,6-diaminopimelate + H2O = (2S,6S)-2,6-diaminopimelate + succinate</text>
        <dbReference type="Rhea" id="RHEA:22608"/>
        <dbReference type="ChEBI" id="CHEBI:15377"/>
        <dbReference type="ChEBI" id="CHEBI:30031"/>
        <dbReference type="ChEBI" id="CHEBI:57609"/>
        <dbReference type="ChEBI" id="CHEBI:58087"/>
        <dbReference type="EC" id="3.5.1.18"/>
    </reaction>
</comment>
<comment type="cofactor">
    <cofactor evidence="1">
        <name>Zn(2+)</name>
        <dbReference type="ChEBI" id="CHEBI:29105"/>
    </cofactor>
    <cofactor evidence="1">
        <name>Co(2+)</name>
        <dbReference type="ChEBI" id="CHEBI:48828"/>
    </cofactor>
    <text evidence="1">Binds 2 Zn(2+) or Co(2+) ions per subunit.</text>
</comment>
<comment type="pathway">
    <text evidence="1">Amino-acid biosynthesis; L-lysine biosynthesis via DAP pathway; LL-2,6-diaminopimelate from (S)-tetrahydrodipicolinate (succinylase route): step 3/3.</text>
</comment>
<comment type="subunit">
    <text evidence="1">Homodimer.</text>
</comment>
<comment type="similarity">
    <text evidence="1">Belongs to the peptidase M20A family. DapE subfamily.</text>
</comment>
<accession>Q92SH1</accession>
<sequence>MFPTDPVSNLAALIRCPSVTPAEGGALAALEAMLAPVGFKVDRVVAKEPGTPDIENLYARTGGEGPHLMFAGHTDVVPVGDEAAWSRPPFSAAIAEGEMYGRGAVDMKGGIACFVAAVARHIEKHGAPKGSISFLITGDEEGPAINGTVKLLEWAAARGERWDACLVGEPTNPDCIGDMIKIGRRGSLSGRITVHGVQGHAAYPHLADNPVRSILQIAQALMDPPFDDGTENFQPSNLEVTTIDVGNTAVNVIPAKASAAFNIRFNDRWTAESLMAEIVARLDRAAAGSALRPGRAPARYEIVWNERPSHVFLTRNNALIDSLSGAVEAVTGRQPQLSTTGGTSDARFIKDYCPVVEFGLVGKTMHMVDERVALADLETLTGIYETFIARWFGHAAA</sequence>
<proteinExistence type="inferred from homology"/>
<protein>
    <recommendedName>
        <fullName evidence="1">Succinyl-diaminopimelate desuccinylase</fullName>
        <shortName evidence="1">SDAP desuccinylase</shortName>
        <ecNumber evidence="1">3.5.1.18</ecNumber>
    </recommendedName>
    <alternativeName>
        <fullName evidence="1">N-succinyl-LL-2,6-diaminoheptanedioate amidohydrolase</fullName>
    </alternativeName>
</protein>
<feature type="chain" id="PRO_0000375683" description="Succinyl-diaminopimelate desuccinylase">
    <location>
        <begin position="1"/>
        <end position="397"/>
    </location>
</feature>
<feature type="active site" evidence="1">
    <location>
        <position position="75"/>
    </location>
</feature>
<feature type="active site" description="Proton acceptor" evidence="1">
    <location>
        <position position="140"/>
    </location>
</feature>
<feature type="binding site" evidence="1">
    <location>
        <position position="73"/>
    </location>
    <ligand>
        <name>Zn(2+)</name>
        <dbReference type="ChEBI" id="CHEBI:29105"/>
        <label>1</label>
    </ligand>
</feature>
<feature type="binding site" evidence="1">
    <location>
        <position position="106"/>
    </location>
    <ligand>
        <name>Zn(2+)</name>
        <dbReference type="ChEBI" id="CHEBI:29105"/>
        <label>1</label>
    </ligand>
</feature>
<feature type="binding site" evidence="1">
    <location>
        <position position="106"/>
    </location>
    <ligand>
        <name>Zn(2+)</name>
        <dbReference type="ChEBI" id="CHEBI:29105"/>
        <label>2</label>
    </ligand>
</feature>
<feature type="binding site" evidence="1">
    <location>
        <position position="141"/>
    </location>
    <ligand>
        <name>Zn(2+)</name>
        <dbReference type="ChEBI" id="CHEBI:29105"/>
        <label>2</label>
    </ligand>
</feature>
<feature type="binding site" evidence="1">
    <location>
        <position position="169"/>
    </location>
    <ligand>
        <name>Zn(2+)</name>
        <dbReference type="ChEBI" id="CHEBI:29105"/>
        <label>1</label>
    </ligand>
</feature>
<feature type="binding site" evidence="1">
    <location>
        <position position="366"/>
    </location>
    <ligand>
        <name>Zn(2+)</name>
        <dbReference type="ChEBI" id="CHEBI:29105"/>
        <label>2</label>
    </ligand>
</feature>